<proteinExistence type="inferred from homology"/>
<feature type="signal peptide" evidence="1">
    <location>
        <begin position="1"/>
        <end position="24"/>
    </location>
</feature>
<feature type="chain" id="PRO_0000236831" description="Flagellar L-ring protein">
    <location>
        <begin position="25"/>
        <end position="237"/>
    </location>
</feature>
<feature type="lipid moiety-binding region" description="N-palmitoyl cysteine" evidence="1">
    <location>
        <position position="25"/>
    </location>
</feature>
<feature type="lipid moiety-binding region" description="S-diacylglycerol cysteine" evidence="1">
    <location>
        <position position="25"/>
    </location>
</feature>
<keyword id="KW-0975">Bacterial flagellum</keyword>
<keyword id="KW-0998">Cell outer membrane</keyword>
<keyword id="KW-0449">Lipoprotein</keyword>
<keyword id="KW-0472">Membrane</keyword>
<keyword id="KW-0564">Palmitate</keyword>
<keyword id="KW-0732">Signal</keyword>
<protein>
    <recommendedName>
        <fullName evidence="1">Flagellar L-ring protein</fullName>
    </recommendedName>
    <alternativeName>
        <fullName evidence="1">Basal body L-ring protein</fullName>
    </alternativeName>
</protein>
<evidence type="ECO:0000255" key="1">
    <source>
        <dbReference type="HAMAP-Rule" id="MF_00415"/>
    </source>
</evidence>
<comment type="function">
    <text evidence="1">Assembles around the rod to form the L-ring and probably protects the motor/basal body from shearing forces during rotation.</text>
</comment>
<comment type="subunit">
    <text evidence="1">The basal body constitutes a major portion of the flagellar organelle and consists of four rings (L,P,S, and M) mounted on a central rod.</text>
</comment>
<comment type="subcellular location">
    <subcellularLocation>
        <location evidence="1">Cell outer membrane</location>
        <topology evidence="1">Lipid-anchor</topology>
    </subcellularLocation>
    <subcellularLocation>
        <location evidence="1">Bacterial flagellum basal body</location>
    </subcellularLocation>
</comment>
<comment type="similarity">
    <text evidence="1">Belongs to the FlgH family.</text>
</comment>
<organism>
    <name type="scientific">Pseudomonas syringae pv. syringae (strain B728a)</name>
    <dbReference type="NCBI Taxonomy" id="205918"/>
    <lineage>
        <taxon>Bacteria</taxon>
        <taxon>Pseudomonadati</taxon>
        <taxon>Pseudomonadota</taxon>
        <taxon>Gammaproteobacteria</taxon>
        <taxon>Pseudomonadales</taxon>
        <taxon>Pseudomonadaceae</taxon>
        <taxon>Pseudomonas</taxon>
        <taxon>Pseudomonas syringae</taxon>
    </lineage>
</organism>
<gene>
    <name evidence="1" type="primary">flgH</name>
    <name type="ordered locus">Psyr_3474</name>
</gene>
<reference key="1">
    <citation type="journal article" date="2005" name="Proc. Natl. Acad. Sci. U.S.A.">
        <title>Comparison of the complete genome sequences of Pseudomonas syringae pv. syringae B728a and pv. tomato DC3000.</title>
        <authorList>
            <person name="Feil H."/>
            <person name="Feil W.S."/>
            <person name="Chain P."/>
            <person name="Larimer F."/>
            <person name="Dibartolo G."/>
            <person name="Copeland A."/>
            <person name="Lykidis A."/>
            <person name="Trong S."/>
            <person name="Nolan M."/>
            <person name="Goltsman E."/>
            <person name="Thiel J."/>
            <person name="Malfatti S."/>
            <person name="Loper J.E."/>
            <person name="Lapidus A."/>
            <person name="Detter J.C."/>
            <person name="Land M."/>
            <person name="Richardson P.M."/>
            <person name="Kyrpides N.C."/>
            <person name="Ivanova N."/>
            <person name="Lindow S.E."/>
        </authorList>
    </citation>
    <scope>NUCLEOTIDE SEQUENCE [LARGE SCALE GENOMIC DNA]</scope>
    <source>
        <strain>B728a</strain>
    </source>
</reference>
<sequence>MNRLSVPRFSVLIASLCGITLLSGCVAPTAKPNDPYYAPVLPRTPMSAAANNGAIYQAGFEQNLYGDRKAFRIGDIITITLSERMAASKAATSAMSKDSTNSIGLTSLFGSGLTTNNPIGGNDLSLNAGYNGARTTKGDGKAAQSNSLTGSVTVTVADVLPNGILAVRGEKWMTLNTGDELVRIAGLVRADDIATDNTVSSTRIADARITYSGTGAFADTSQPGWFDRFFLSPLFPF</sequence>
<dbReference type="EMBL" id="CP000075">
    <property type="protein sequence ID" value="AAY38506.1"/>
    <property type="molecule type" value="Genomic_DNA"/>
</dbReference>
<dbReference type="RefSeq" id="WP_011268457.1">
    <property type="nucleotide sequence ID" value="NC_007005.1"/>
</dbReference>
<dbReference type="RefSeq" id="YP_236544.1">
    <property type="nucleotide sequence ID" value="NC_007005.1"/>
</dbReference>
<dbReference type="SMR" id="Q4ZQR6"/>
<dbReference type="STRING" id="205918.Psyr_3474"/>
<dbReference type="GeneID" id="96219948"/>
<dbReference type="KEGG" id="psb:Psyr_3474"/>
<dbReference type="PATRIC" id="fig|205918.7.peg.3559"/>
<dbReference type="eggNOG" id="COG2063">
    <property type="taxonomic scope" value="Bacteria"/>
</dbReference>
<dbReference type="HOGENOM" id="CLU_069313_0_2_6"/>
<dbReference type="OrthoDB" id="9789463at2"/>
<dbReference type="Proteomes" id="UP000000426">
    <property type="component" value="Chromosome"/>
</dbReference>
<dbReference type="GO" id="GO:0009427">
    <property type="term" value="C:bacterial-type flagellum basal body, distal rod, L ring"/>
    <property type="evidence" value="ECO:0007669"/>
    <property type="project" value="InterPro"/>
</dbReference>
<dbReference type="GO" id="GO:0009279">
    <property type="term" value="C:cell outer membrane"/>
    <property type="evidence" value="ECO:0007669"/>
    <property type="project" value="UniProtKB-SubCell"/>
</dbReference>
<dbReference type="GO" id="GO:0003774">
    <property type="term" value="F:cytoskeletal motor activity"/>
    <property type="evidence" value="ECO:0007669"/>
    <property type="project" value="InterPro"/>
</dbReference>
<dbReference type="GO" id="GO:0071973">
    <property type="term" value="P:bacterial-type flagellum-dependent cell motility"/>
    <property type="evidence" value="ECO:0007669"/>
    <property type="project" value="InterPro"/>
</dbReference>
<dbReference type="HAMAP" id="MF_00415">
    <property type="entry name" value="FlgH"/>
    <property type="match status" value="1"/>
</dbReference>
<dbReference type="InterPro" id="IPR000527">
    <property type="entry name" value="Flag_Lring"/>
</dbReference>
<dbReference type="NCBIfam" id="NF001304">
    <property type="entry name" value="PRK00249.1-4"/>
    <property type="match status" value="1"/>
</dbReference>
<dbReference type="PANTHER" id="PTHR34933">
    <property type="entry name" value="FLAGELLAR L-RING PROTEIN"/>
    <property type="match status" value="1"/>
</dbReference>
<dbReference type="PANTHER" id="PTHR34933:SF1">
    <property type="entry name" value="FLAGELLAR L-RING PROTEIN"/>
    <property type="match status" value="1"/>
</dbReference>
<dbReference type="Pfam" id="PF02107">
    <property type="entry name" value="FlgH"/>
    <property type="match status" value="1"/>
</dbReference>
<dbReference type="PRINTS" id="PR01008">
    <property type="entry name" value="FLGLRINGFLGH"/>
</dbReference>
<dbReference type="PROSITE" id="PS51257">
    <property type="entry name" value="PROKAR_LIPOPROTEIN"/>
    <property type="match status" value="1"/>
</dbReference>
<accession>Q4ZQR6</accession>
<name>FLGH_PSEU2</name>